<proteinExistence type="inferred from homology"/>
<gene>
    <name evidence="1" type="primary">dapB</name>
    <name type="ordered locus">USA300HOU_1331</name>
</gene>
<dbReference type="EC" id="1.17.1.8" evidence="1"/>
<dbReference type="EMBL" id="CP000730">
    <property type="protein sequence ID" value="ABX29342.1"/>
    <property type="molecule type" value="Genomic_DNA"/>
</dbReference>
<dbReference type="RefSeq" id="WP_000698235.1">
    <property type="nucleotide sequence ID" value="NC_010079.1"/>
</dbReference>
<dbReference type="SMR" id="A8Z3X4"/>
<dbReference type="KEGG" id="sax:USA300HOU_1331"/>
<dbReference type="HOGENOM" id="CLU_047479_2_2_9"/>
<dbReference type="UniPathway" id="UPA00034">
    <property type="reaction ID" value="UER00018"/>
</dbReference>
<dbReference type="GO" id="GO:0005829">
    <property type="term" value="C:cytosol"/>
    <property type="evidence" value="ECO:0007669"/>
    <property type="project" value="TreeGrafter"/>
</dbReference>
<dbReference type="GO" id="GO:0008839">
    <property type="term" value="F:4-hydroxy-tetrahydrodipicolinate reductase"/>
    <property type="evidence" value="ECO:0007669"/>
    <property type="project" value="UniProtKB-EC"/>
</dbReference>
<dbReference type="GO" id="GO:0051287">
    <property type="term" value="F:NAD binding"/>
    <property type="evidence" value="ECO:0007669"/>
    <property type="project" value="UniProtKB-UniRule"/>
</dbReference>
<dbReference type="GO" id="GO:0050661">
    <property type="term" value="F:NADP binding"/>
    <property type="evidence" value="ECO:0007669"/>
    <property type="project" value="UniProtKB-UniRule"/>
</dbReference>
<dbReference type="GO" id="GO:0016726">
    <property type="term" value="F:oxidoreductase activity, acting on CH or CH2 groups, NAD or NADP as acceptor"/>
    <property type="evidence" value="ECO:0007669"/>
    <property type="project" value="UniProtKB-UniRule"/>
</dbReference>
<dbReference type="GO" id="GO:0019877">
    <property type="term" value="P:diaminopimelate biosynthetic process"/>
    <property type="evidence" value="ECO:0007669"/>
    <property type="project" value="UniProtKB-UniRule"/>
</dbReference>
<dbReference type="GO" id="GO:0009089">
    <property type="term" value="P:lysine biosynthetic process via diaminopimelate"/>
    <property type="evidence" value="ECO:0007669"/>
    <property type="project" value="UniProtKB-UniRule"/>
</dbReference>
<dbReference type="CDD" id="cd02274">
    <property type="entry name" value="DHDPR_N"/>
    <property type="match status" value="1"/>
</dbReference>
<dbReference type="FunFam" id="3.30.360.10:FF:000009">
    <property type="entry name" value="4-hydroxy-tetrahydrodipicolinate reductase"/>
    <property type="match status" value="1"/>
</dbReference>
<dbReference type="Gene3D" id="3.30.360.10">
    <property type="entry name" value="Dihydrodipicolinate Reductase, domain 2"/>
    <property type="match status" value="1"/>
</dbReference>
<dbReference type="Gene3D" id="3.40.50.720">
    <property type="entry name" value="NAD(P)-binding Rossmann-like Domain"/>
    <property type="match status" value="1"/>
</dbReference>
<dbReference type="HAMAP" id="MF_00102">
    <property type="entry name" value="DapB"/>
    <property type="match status" value="1"/>
</dbReference>
<dbReference type="InterPro" id="IPR022663">
    <property type="entry name" value="DapB_C"/>
</dbReference>
<dbReference type="InterPro" id="IPR000846">
    <property type="entry name" value="DapB_N"/>
</dbReference>
<dbReference type="InterPro" id="IPR022664">
    <property type="entry name" value="DapB_N_CS"/>
</dbReference>
<dbReference type="InterPro" id="IPR023940">
    <property type="entry name" value="DHDPR_bac"/>
</dbReference>
<dbReference type="InterPro" id="IPR036291">
    <property type="entry name" value="NAD(P)-bd_dom_sf"/>
</dbReference>
<dbReference type="NCBIfam" id="TIGR00036">
    <property type="entry name" value="dapB"/>
    <property type="match status" value="1"/>
</dbReference>
<dbReference type="PANTHER" id="PTHR20836:SF7">
    <property type="entry name" value="4-HYDROXY-TETRAHYDRODIPICOLINATE REDUCTASE"/>
    <property type="match status" value="1"/>
</dbReference>
<dbReference type="PANTHER" id="PTHR20836">
    <property type="entry name" value="DIHYDRODIPICOLINATE REDUCTASE"/>
    <property type="match status" value="1"/>
</dbReference>
<dbReference type="Pfam" id="PF05173">
    <property type="entry name" value="DapB_C"/>
    <property type="match status" value="1"/>
</dbReference>
<dbReference type="Pfam" id="PF01113">
    <property type="entry name" value="DapB_N"/>
    <property type="match status" value="1"/>
</dbReference>
<dbReference type="PIRSF" id="PIRSF000161">
    <property type="entry name" value="DHPR"/>
    <property type="match status" value="1"/>
</dbReference>
<dbReference type="SUPFAM" id="SSF55347">
    <property type="entry name" value="Glyceraldehyde-3-phosphate dehydrogenase-like, C-terminal domain"/>
    <property type="match status" value="1"/>
</dbReference>
<dbReference type="SUPFAM" id="SSF51735">
    <property type="entry name" value="NAD(P)-binding Rossmann-fold domains"/>
    <property type="match status" value="1"/>
</dbReference>
<dbReference type="PROSITE" id="PS01298">
    <property type="entry name" value="DAPB"/>
    <property type="match status" value="1"/>
</dbReference>
<keyword id="KW-0028">Amino-acid biosynthesis</keyword>
<keyword id="KW-0963">Cytoplasm</keyword>
<keyword id="KW-0220">Diaminopimelate biosynthesis</keyword>
<keyword id="KW-0457">Lysine biosynthesis</keyword>
<keyword id="KW-0520">NAD</keyword>
<keyword id="KW-0521">NADP</keyword>
<keyword id="KW-0560">Oxidoreductase</keyword>
<protein>
    <recommendedName>
        <fullName evidence="1">4-hydroxy-tetrahydrodipicolinate reductase</fullName>
        <shortName evidence="1">HTPA reductase</shortName>
        <ecNumber evidence="1">1.17.1.8</ecNumber>
    </recommendedName>
</protein>
<sequence>MKILLIGYGAMNQRVARLAEEKGHEIVGVIENTPKATTPYQQYQHIADVKGADVAIDFSNPNLLFPLLDEDFHLPLVVATTGEKEKLLNKLDELSQNMPVFFSANMSYGVHALTKILAAAVPLLDDFDIELTEAHHNKKVDAPSGTLEKLYDVIVSLKENVTPVYDRHELNEKRQPQDIGIHSIRGGTIVGEHEVLFAGTDETIQITHRAQSKDIFANGAIQAAERLVNKPNGFYTFDNL</sequence>
<feature type="chain" id="PRO_1000094008" description="4-hydroxy-tetrahydrodipicolinate reductase">
    <location>
        <begin position="1"/>
        <end position="240"/>
    </location>
</feature>
<feature type="active site" description="Proton donor/acceptor" evidence="1">
    <location>
        <position position="135"/>
    </location>
</feature>
<feature type="active site" description="Proton donor" evidence="1">
    <location>
        <position position="139"/>
    </location>
</feature>
<feature type="binding site" evidence="1">
    <location>
        <begin position="79"/>
        <end position="81"/>
    </location>
    <ligand>
        <name>NAD(+)</name>
        <dbReference type="ChEBI" id="CHEBI:57540"/>
    </ligand>
</feature>
<feature type="binding site" evidence="1">
    <location>
        <begin position="103"/>
        <end position="106"/>
    </location>
    <ligand>
        <name>NAD(+)</name>
        <dbReference type="ChEBI" id="CHEBI:57540"/>
    </ligand>
</feature>
<feature type="binding site" evidence="1">
    <location>
        <position position="136"/>
    </location>
    <ligand>
        <name>(S)-2,3,4,5-tetrahydrodipicolinate</name>
        <dbReference type="ChEBI" id="CHEBI:16845"/>
    </ligand>
</feature>
<feature type="binding site" evidence="1">
    <location>
        <begin position="145"/>
        <end position="146"/>
    </location>
    <ligand>
        <name>(S)-2,3,4,5-tetrahydrodipicolinate</name>
        <dbReference type="ChEBI" id="CHEBI:16845"/>
    </ligand>
</feature>
<accession>A8Z3X4</accession>
<evidence type="ECO:0000255" key="1">
    <source>
        <dbReference type="HAMAP-Rule" id="MF_00102"/>
    </source>
</evidence>
<evidence type="ECO:0000305" key="2"/>
<organism>
    <name type="scientific">Staphylococcus aureus (strain USA300 / TCH1516)</name>
    <dbReference type="NCBI Taxonomy" id="451516"/>
    <lineage>
        <taxon>Bacteria</taxon>
        <taxon>Bacillati</taxon>
        <taxon>Bacillota</taxon>
        <taxon>Bacilli</taxon>
        <taxon>Bacillales</taxon>
        <taxon>Staphylococcaceae</taxon>
        <taxon>Staphylococcus</taxon>
    </lineage>
</organism>
<reference key="1">
    <citation type="journal article" date="2007" name="BMC Microbiol.">
        <title>Subtle genetic changes enhance virulence of methicillin resistant and sensitive Staphylococcus aureus.</title>
        <authorList>
            <person name="Highlander S.K."/>
            <person name="Hulten K.G."/>
            <person name="Qin X."/>
            <person name="Jiang H."/>
            <person name="Yerrapragada S."/>
            <person name="Mason E.O. Jr."/>
            <person name="Shang Y."/>
            <person name="Williams T.M."/>
            <person name="Fortunov R.M."/>
            <person name="Liu Y."/>
            <person name="Igboeli O."/>
            <person name="Petrosino J."/>
            <person name="Tirumalai M."/>
            <person name="Uzman A."/>
            <person name="Fox G.E."/>
            <person name="Cardenas A.M."/>
            <person name="Muzny D.M."/>
            <person name="Hemphill L."/>
            <person name="Ding Y."/>
            <person name="Dugan S."/>
            <person name="Blyth P.R."/>
            <person name="Buhay C.J."/>
            <person name="Dinh H.H."/>
            <person name="Hawes A.C."/>
            <person name="Holder M."/>
            <person name="Kovar C.L."/>
            <person name="Lee S.L."/>
            <person name="Liu W."/>
            <person name="Nazareth L.V."/>
            <person name="Wang Q."/>
            <person name="Zhou J."/>
            <person name="Kaplan S.L."/>
            <person name="Weinstock G.M."/>
        </authorList>
    </citation>
    <scope>NUCLEOTIDE SEQUENCE [LARGE SCALE GENOMIC DNA]</scope>
    <source>
        <strain>USA300 / TCH1516</strain>
    </source>
</reference>
<comment type="function">
    <text evidence="1">Catalyzes the conversion of 4-hydroxy-tetrahydrodipicolinate (HTPA) to tetrahydrodipicolinate.</text>
</comment>
<comment type="catalytic activity">
    <reaction evidence="1">
        <text>(S)-2,3,4,5-tetrahydrodipicolinate + NAD(+) + H2O = (2S,4S)-4-hydroxy-2,3,4,5-tetrahydrodipicolinate + NADH + H(+)</text>
        <dbReference type="Rhea" id="RHEA:35323"/>
        <dbReference type="ChEBI" id="CHEBI:15377"/>
        <dbReference type="ChEBI" id="CHEBI:15378"/>
        <dbReference type="ChEBI" id="CHEBI:16845"/>
        <dbReference type="ChEBI" id="CHEBI:57540"/>
        <dbReference type="ChEBI" id="CHEBI:57945"/>
        <dbReference type="ChEBI" id="CHEBI:67139"/>
        <dbReference type="EC" id="1.17.1.8"/>
    </reaction>
</comment>
<comment type="catalytic activity">
    <reaction evidence="1">
        <text>(S)-2,3,4,5-tetrahydrodipicolinate + NADP(+) + H2O = (2S,4S)-4-hydroxy-2,3,4,5-tetrahydrodipicolinate + NADPH + H(+)</text>
        <dbReference type="Rhea" id="RHEA:35331"/>
        <dbReference type="ChEBI" id="CHEBI:15377"/>
        <dbReference type="ChEBI" id="CHEBI:15378"/>
        <dbReference type="ChEBI" id="CHEBI:16845"/>
        <dbReference type="ChEBI" id="CHEBI:57783"/>
        <dbReference type="ChEBI" id="CHEBI:58349"/>
        <dbReference type="ChEBI" id="CHEBI:67139"/>
        <dbReference type="EC" id="1.17.1.8"/>
    </reaction>
</comment>
<comment type="pathway">
    <text evidence="1">Amino-acid biosynthesis; L-lysine biosynthesis via DAP pathway; (S)-tetrahydrodipicolinate from L-aspartate: step 4/4.</text>
</comment>
<comment type="subcellular location">
    <subcellularLocation>
        <location evidence="1">Cytoplasm</location>
    </subcellularLocation>
</comment>
<comment type="similarity">
    <text evidence="1">Belongs to the DapB family.</text>
</comment>
<comment type="caution">
    <text evidence="2">Was originally thought to be a dihydrodipicolinate reductase (DHDPR), catalyzing the conversion of dihydrodipicolinate to tetrahydrodipicolinate. However, it was shown in E.coli that the substrate of the enzymatic reaction is not dihydrodipicolinate (DHDP) but in fact (2S,4S)-4-hydroxy-2,3,4,5-tetrahydrodipicolinic acid (HTPA), the product released by the DapA-catalyzed reaction.</text>
</comment>
<name>DAPB_STAAT</name>